<reference key="1">
    <citation type="journal article" date="1988" name="Nature">
        <title>Squid major lens polypeptides are homologous to glutathione S-transferases subunits.</title>
        <authorList>
            <person name="Tomarev S.I."/>
            <person name="Zinovieva R.D."/>
        </authorList>
    </citation>
    <scope>NUCLEOTIDE SEQUENCE [MRNA]</scope>
</reference>
<reference key="2">
    <citation type="journal article" date="1992" name="J. Biol. Chem.">
        <title>Characterization of squid crystallin genes. Comparison with mammalian glutathione S-transferase genes.</title>
        <authorList>
            <person name="Tomarev S.I."/>
            <person name="Zinovieva R.D."/>
            <person name="Piatigorsky J."/>
        </authorList>
    </citation>
    <scope>NUCLEOTIDE SEQUENCE [GENOMIC DNA]</scope>
</reference>
<keyword id="KW-0273">Eye lens protein</keyword>
<feature type="chain" id="PRO_0000186002" description="S-crystallin SL20-1">
    <location>
        <begin position="1"/>
        <end position="222"/>
    </location>
</feature>
<feature type="domain" description="GST N-terminal">
    <location>
        <begin position="2"/>
        <end position="80"/>
    </location>
</feature>
<feature type="domain" description="GST C-terminal">
    <location>
        <begin position="82"/>
        <end position="222"/>
    </location>
</feature>
<feature type="sequence conflict" description="In Ref. 2; AAA29402." evidence="1" ref="2">
    <original>S</original>
    <variation>P</variation>
    <location>
        <position position="148"/>
    </location>
</feature>
<sequence length="222" mass="26604">MPNYTLYYFNGRGRAEICRMLMAAAGVQYTDKRFEFNEWDKYRNDMPSMCVPVLDIDGQNKMPETMAIARYLARENGYYGKNNMDMFRIDYICDCFYEILHDYMRYFHTKNGRFMQGSGTDMSPDMDPTQMTSYIQNRYLDTCRRILSFLERTLEMRNGGKEFFMGDQMMLCDMMCYCCLENPMLEDQTTFNNFPKLMSLWKRVASHPKITPYLKKRNNTNW</sequence>
<organism>
    <name type="scientific">Nototodarus sloanii</name>
    <name type="common">Wellington flying squid</name>
    <name type="synonym">Ommastrephes sloanei</name>
    <dbReference type="NCBI Taxonomy" id="215440"/>
    <lineage>
        <taxon>Eukaryota</taxon>
        <taxon>Metazoa</taxon>
        <taxon>Spiralia</taxon>
        <taxon>Lophotrochozoa</taxon>
        <taxon>Mollusca</taxon>
        <taxon>Cephalopoda</taxon>
        <taxon>Coleoidea</taxon>
        <taxon>Decapodiformes</taxon>
        <taxon>Oegopsida</taxon>
        <taxon>Ommastrephidae</taxon>
        <taxon>Nototodarus</taxon>
    </lineage>
</organism>
<accession>P18425</accession>
<protein>
    <recommendedName>
        <fullName>S-crystallin SL20-1</fullName>
    </recommendedName>
    <alternativeName>
        <fullName>Major lens polypeptide</fullName>
    </alternativeName>
</protein>
<name>SCR20_NOTSL</name>
<dbReference type="EMBL" id="M36937">
    <property type="protein sequence ID" value="AAA29405.1"/>
    <property type="molecule type" value="mRNA"/>
</dbReference>
<dbReference type="EMBL" id="M74315">
    <property type="status" value="NOT_ANNOTATED_CDS"/>
    <property type="molecule type" value="Genomic_DNA"/>
</dbReference>
<dbReference type="EMBL" id="M74316">
    <property type="status" value="NOT_ANNOTATED_CDS"/>
    <property type="molecule type" value="Genomic_DNA"/>
</dbReference>
<dbReference type="EMBL" id="M74317">
    <property type="status" value="NOT_ANNOTATED_CDS"/>
    <property type="molecule type" value="Genomic_DNA"/>
</dbReference>
<dbReference type="EMBL" id="M74318">
    <property type="status" value="NOT_ANNOTATED_CDS"/>
    <property type="molecule type" value="Genomic_DNA"/>
</dbReference>
<dbReference type="EMBL" id="M74319">
    <property type="status" value="NOT_ANNOTATED_CDS"/>
    <property type="molecule type" value="Genomic_DNA"/>
</dbReference>
<dbReference type="EMBL" id="M74320">
    <property type="protein sequence ID" value="AAA29402.1"/>
    <property type="molecule type" value="Genomic_DNA"/>
</dbReference>
<dbReference type="PIR" id="S06442">
    <property type="entry name" value="S06442"/>
</dbReference>
<dbReference type="SMR" id="P18425"/>
<dbReference type="GO" id="GO:0004364">
    <property type="term" value="F:glutathione transferase activity"/>
    <property type="evidence" value="ECO:0007669"/>
    <property type="project" value="TreeGrafter"/>
</dbReference>
<dbReference type="GO" id="GO:0005212">
    <property type="term" value="F:structural constituent of eye lens"/>
    <property type="evidence" value="ECO:0007669"/>
    <property type="project" value="UniProtKB-KW"/>
</dbReference>
<dbReference type="GO" id="GO:0006749">
    <property type="term" value="P:glutathione metabolic process"/>
    <property type="evidence" value="ECO:0007669"/>
    <property type="project" value="TreeGrafter"/>
</dbReference>
<dbReference type="CDD" id="cd03192">
    <property type="entry name" value="GST_C_Sigma_like"/>
    <property type="match status" value="1"/>
</dbReference>
<dbReference type="CDD" id="cd03039">
    <property type="entry name" value="GST_N_Sigma_like"/>
    <property type="match status" value="1"/>
</dbReference>
<dbReference type="FunFam" id="3.40.30.10:FF:000258">
    <property type="entry name" value="Glutathione S-transferase"/>
    <property type="match status" value="1"/>
</dbReference>
<dbReference type="Gene3D" id="1.20.1050.10">
    <property type="match status" value="1"/>
</dbReference>
<dbReference type="Gene3D" id="3.40.30.10">
    <property type="entry name" value="Glutaredoxin"/>
    <property type="match status" value="1"/>
</dbReference>
<dbReference type="InterPro" id="IPR010987">
    <property type="entry name" value="Glutathione-S-Trfase_C-like"/>
</dbReference>
<dbReference type="InterPro" id="IPR036282">
    <property type="entry name" value="Glutathione-S-Trfase_C_sf"/>
</dbReference>
<dbReference type="InterPro" id="IPR040079">
    <property type="entry name" value="Glutathione_S-Trfase"/>
</dbReference>
<dbReference type="InterPro" id="IPR004045">
    <property type="entry name" value="Glutathione_S-Trfase_N"/>
</dbReference>
<dbReference type="InterPro" id="IPR004046">
    <property type="entry name" value="GST_C"/>
</dbReference>
<dbReference type="InterPro" id="IPR050213">
    <property type="entry name" value="GST_superfamily"/>
</dbReference>
<dbReference type="InterPro" id="IPR003083">
    <property type="entry name" value="S-crystallin"/>
</dbReference>
<dbReference type="InterPro" id="IPR036249">
    <property type="entry name" value="Thioredoxin-like_sf"/>
</dbReference>
<dbReference type="PANTHER" id="PTHR11571">
    <property type="entry name" value="GLUTATHIONE S-TRANSFERASE"/>
    <property type="match status" value="1"/>
</dbReference>
<dbReference type="PANTHER" id="PTHR11571:SF150">
    <property type="entry name" value="GLUTATHIONE S-TRANSFERASE"/>
    <property type="match status" value="1"/>
</dbReference>
<dbReference type="Pfam" id="PF14497">
    <property type="entry name" value="GST_C_3"/>
    <property type="match status" value="1"/>
</dbReference>
<dbReference type="Pfam" id="PF02798">
    <property type="entry name" value="GST_N"/>
    <property type="match status" value="1"/>
</dbReference>
<dbReference type="PRINTS" id="PR01269">
    <property type="entry name" value="SCRYSTALLIN"/>
</dbReference>
<dbReference type="SFLD" id="SFLDG01205">
    <property type="entry name" value="AMPS.1"/>
    <property type="match status" value="1"/>
</dbReference>
<dbReference type="SFLD" id="SFLDS00019">
    <property type="entry name" value="Glutathione_Transferase_(cytos"/>
    <property type="match status" value="1"/>
</dbReference>
<dbReference type="SUPFAM" id="SSF47616">
    <property type="entry name" value="GST C-terminal domain-like"/>
    <property type="match status" value="1"/>
</dbReference>
<dbReference type="SUPFAM" id="SSF52833">
    <property type="entry name" value="Thioredoxin-like"/>
    <property type="match status" value="1"/>
</dbReference>
<dbReference type="PROSITE" id="PS50405">
    <property type="entry name" value="GST_CTER"/>
    <property type="match status" value="1"/>
</dbReference>
<dbReference type="PROSITE" id="PS50404">
    <property type="entry name" value="GST_NTER"/>
    <property type="match status" value="1"/>
</dbReference>
<evidence type="ECO:0000305" key="1"/>
<comment type="function">
    <text>S-crystallins are structural components of squids and octopi eye lens. Contains relatively little if any GST activity.</text>
</comment>
<comment type="tissue specificity">
    <text>Lens.</text>
</comment>
<comment type="similarity">
    <text evidence="1">Belongs to the GST superfamily.</text>
</comment>
<proteinExistence type="evidence at transcript level"/>